<accession>P76491</accession>
<accession>Q2MAM2</accession>
<evidence type="ECO:0000255" key="1">
    <source>
        <dbReference type="HAMAP-Rule" id="MF_01100"/>
    </source>
</evidence>
<evidence type="ECO:0000255" key="2">
    <source>
        <dbReference type="PROSITE-ProRule" id="PRU01175"/>
    </source>
</evidence>
<evidence type="ECO:0000269" key="3">
    <source>
    </source>
</evidence>
<evidence type="ECO:0000269" key="4">
    <source>
    </source>
</evidence>
<evidence type="ECO:0000269" key="5">
    <source>
    </source>
</evidence>
<evidence type="ECO:0000303" key="6">
    <source>
    </source>
</evidence>
<evidence type="ECO:0000305" key="7"/>
<evidence type="ECO:0007744" key="8">
    <source>
        <dbReference type="PDB" id="2PAQ"/>
    </source>
</evidence>
<evidence type="ECO:0007744" key="9">
    <source>
        <dbReference type="PDB" id="2PAR"/>
    </source>
</evidence>
<evidence type="ECO:0007744" key="10">
    <source>
        <dbReference type="PDB" id="2PAU"/>
    </source>
</evidence>
<evidence type="ECO:0007829" key="11">
    <source>
        <dbReference type="PDB" id="2PAQ"/>
    </source>
</evidence>
<evidence type="ECO:0007829" key="12">
    <source>
        <dbReference type="PDB" id="2PAR"/>
    </source>
</evidence>
<feature type="chain" id="PRO_0000095049" description="5'-deoxynucleotidase YfbR">
    <location>
        <begin position="1"/>
        <end position="199"/>
    </location>
</feature>
<feature type="domain" description="HD" evidence="2">
    <location>
        <begin position="30"/>
        <end position="142"/>
    </location>
</feature>
<feature type="binding site" evidence="5 10">
    <location>
        <begin position="18"/>
        <end position="19"/>
    </location>
    <ligand>
        <name>substrate</name>
    </ligand>
</feature>
<feature type="binding site" evidence="5 9 10">
    <location>
        <position position="33"/>
    </location>
    <ligand>
        <name>Co(2+)</name>
        <dbReference type="ChEBI" id="CHEBI:48828"/>
    </ligand>
</feature>
<feature type="binding site" evidence="5 10">
    <location>
        <position position="33"/>
    </location>
    <ligand>
        <name>substrate</name>
    </ligand>
</feature>
<feature type="binding site" evidence="5 9 10">
    <location>
        <position position="68"/>
    </location>
    <ligand>
        <name>Co(2+)</name>
        <dbReference type="ChEBI" id="CHEBI:48828"/>
    </ligand>
</feature>
<feature type="binding site" evidence="5 9 10">
    <location>
        <position position="69"/>
    </location>
    <ligand>
        <name>Co(2+)</name>
        <dbReference type="ChEBI" id="CHEBI:48828"/>
    </ligand>
</feature>
<feature type="binding site" evidence="5">
    <location>
        <position position="69"/>
    </location>
    <ligand>
        <name>substrate</name>
    </ligand>
</feature>
<feature type="binding site" evidence="5 10">
    <location>
        <begin position="77"/>
        <end position="80"/>
    </location>
    <ligand>
        <name>substrate</name>
    </ligand>
</feature>
<feature type="binding site" evidence="5 9 10">
    <location>
        <position position="137"/>
    </location>
    <ligand>
        <name>Co(2+)</name>
        <dbReference type="ChEBI" id="CHEBI:48828"/>
    </ligand>
</feature>
<feature type="binding site" evidence="5 10">
    <location>
        <position position="137"/>
    </location>
    <ligand>
        <name>substrate</name>
    </ligand>
</feature>
<feature type="site" description="Appears to be important in orienting the phosphate for catalysis">
    <location>
        <position position="18"/>
    </location>
</feature>
<feature type="mutagenesis site" description="Shows negligible enzymatic activity." evidence="5">
    <original>R</original>
    <variation>A</variation>
    <location>
        <position position="18"/>
    </location>
</feature>
<feature type="mutagenesis site" description="Shows reduced activity and affinity compared to the wild-type." evidence="5">
    <original>V</original>
    <variation>A</variation>
    <location>
        <position position="30"/>
    </location>
</feature>
<feature type="mutagenesis site" description="Shows negligible enzymatic activity." evidence="5">
    <original>H</original>
    <variation>A</variation>
    <location>
        <position position="33"/>
    </location>
</feature>
<feature type="mutagenesis site" description="Shows negligible enzymatic activity." evidence="5">
    <original>H</original>
    <variation>A</variation>
    <location>
        <position position="68"/>
    </location>
</feature>
<feature type="mutagenesis site" description="Shows negligible enzymatic activity." evidence="5">
    <original>D</original>
    <variation>A</variation>
    <location>
        <position position="69"/>
    </location>
</feature>
<feature type="mutagenesis site" description="Shows negligible enzymatic activity." evidence="5">
    <original>E</original>
    <variation>A</variation>
    <location>
        <position position="72"/>
    </location>
</feature>
<feature type="mutagenesis site" description="Shows wild-type activity and substrate affinity." evidence="5">
    <original>E</original>
    <variation>V</variation>
    <location>
        <position position="72"/>
    </location>
</feature>
<feature type="mutagenesis site" description="Shows negligible enzymatic activity." evidence="5">
    <original>D</original>
    <variation>A</variation>
    <location>
        <position position="77"/>
    </location>
</feature>
<feature type="mutagenesis site" description="Shows reduced activity and affinity compared to the wild-type." evidence="5">
    <original>E</original>
    <variation>A</variation>
    <location>
        <position position="122"/>
    </location>
</feature>
<feature type="mutagenesis site" description="Shows negligible enzymatic activity." evidence="5">
    <original>D</original>
    <variation>A</variation>
    <location>
        <position position="137"/>
    </location>
</feature>
<feature type="helix" evidence="11">
    <location>
        <begin position="6"/>
        <end position="10"/>
    </location>
</feature>
<feature type="helix" evidence="11">
    <location>
        <begin position="11"/>
        <end position="15"/>
    </location>
</feature>
<feature type="helix" evidence="11">
    <location>
        <begin position="30"/>
        <end position="51"/>
    </location>
</feature>
<feature type="helix" evidence="11">
    <location>
        <begin position="58"/>
        <end position="67"/>
    </location>
</feature>
<feature type="turn" evidence="11">
    <location>
        <begin position="68"/>
        <end position="71"/>
    </location>
</feature>
<feature type="helix" evidence="11">
    <location>
        <begin position="72"/>
        <end position="75"/>
    </location>
</feature>
<feature type="helix" evidence="11">
    <location>
        <begin position="93"/>
        <end position="105"/>
    </location>
</feature>
<feature type="helix" evidence="11">
    <location>
        <begin position="110"/>
        <end position="112"/>
    </location>
</feature>
<feature type="helix" evidence="11">
    <location>
        <begin position="113"/>
        <end position="120"/>
    </location>
</feature>
<feature type="turn" evidence="11">
    <location>
        <begin position="121"/>
        <end position="123"/>
    </location>
</feature>
<feature type="helix" evidence="11">
    <location>
        <begin position="127"/>
        <end position="150"/>
    </location>
</feature>
<feature type="helix" evidence="11">
    <location>
        <begin position="154"/>
        <end position="156"/>
    </location>
</feature>
<feature type="helix" evidence="11">
    <location>
        <begin position="157"/>
        <end position="169"/>
    </location>
</feature>
<feature type="helix" evidence="11">
    <location>
        <begin position="173"/>
        <end position="182"/>
    </location>
</feature>
<feature type="helix" evidence="12">
    <location>
        <begin position="184"/>
        <end position="186"/>
    </location>
</feature>
<reference key="1">
    <citation type="journal article" date="1997" name="Science">
        <title>The complete genome sequence of Escherichia coli K-12.</title>
        <authorList>
            <person name="Blattner F.R."/>
            <person name="Plunkett G. III"/>
            <person name="Bloch C.A."/>
            <person name="Perna N.T."/>
            <person name="Burland V."/>
            <person name="Riley M."/>
            <person name="Collado-Vides J."/>
            <person name="Glasner J.D."/>
            <person name="Rode C.K."/>
            <person name="Mayhew G.F."/>
            <person name="Gregor J."/>
            <person name="Davis N.W."/>
            <person name="Kirkpatrick H.A."/>
            <person name="Goeden M.A."/>
            <person name="Rose D.J."/>
            <person name="Mau B."/>
            <person name="Shao Y."/>
        </authorList>
    </citation>
    <scope>NUCLEOTIDE SEQUENCE [LARGE SCALE GENOMIC DNA]</scope>
    <source>
        <strain>K12 / MG1655 / ATCC 47076</strain>
    </source>
</reference>
<reference key="2">
    <citation type="journal article" date="2006" name="Mol. Syst. Biol.">
        <title>Highly accurate genome sequences of Escherichia coli K-12 strains MG1655 and W3110.</title>
        <authorList>
            <person name="Hayashi K."/>
            <person name="Morooka N."/>
            <person name="Yamamoto Y."/>
            <person name="Fujita K."/>
            <person name="Isono K."/>
            <person name="Choi S."/>
            <person name="Ohtsubo E."/>
            <person name="Baba T."/>
            <person name="Wanner B.L."/>
            <person name="Mori H."/>
            <person name="Horiuchi T."/>
        </authorList>
    </citation>
    <scope>NUCLEOTIDE SEQUENCE [LARGE SCALE GENOMIC DNA]</scope>
    <source>
        <strain>K12 / W3110 / ATCC 27325 / DSM 5911</strain>
    </source>
</reference>
<reference key="3">
    <citation type="journal article" date="2004" name="J. Biol. Chem.">
        <title>General enzymatic screens identify three new nucleotidases in Escherichia coli. Biochemical characterization of SurE, YfbR, and YjjG.</title>
        <authorList>
            <person name="Proudfoot M."/>
            <person name="Kuznetsova E."/>
            <person name="Brown G."/>
            <person name="Rao N.N."/>
            <person name="Kitagawa M."/>
            <person name="Mori H."/>
            <person name="Savchenko A."/>
            <person name="Yakunin A.F."/>
        </authorList>
    </citation>
    <scope>FUNCTION</scope>
    <scope>CATALYTIC ACTIVITY</scope>
    <scope>SUBSTRATE SPECIFICITY</scope>
    <scope>COFACTOR</scope>
    <scope>SUBUNIT</scope>
    <scope>ACTIVITY REGULATION</scope>
    <scope>BIOPHYSICOCHEMICAL PROPERTIES</scope>
</reference>
<reference key="4">
    <citation type="journal article" date="2007" name="J. Bacteriol.">
        <title>The deoxycytidine pathway for thymidylate synthesis in Escherichia coli.</title>
        <authorList>
            <person name="Weiss B."/>
        </authorList>
    </citation>
    <scope>FUNCTION IN THE SYNTHESIS OF THYMIDYLATE</scope>
</reference>
<reference evidence="8 9 10" key="5">
    <citation type="journal article" date="2008" name="J. Mol. Biol.">
        <title>Structural insight into the mechanism of substrate specificity and catalytic activity of an HD-domain phosphohydrolase: the 5'-deoxyribonucleotidase YfbR from Escherichia coli.</title>
        <authorList>
            <person name="Zimmerman M.D."/>
            <person name="Proudfoot M."/>
            <person name="Yakunin A."/>
            <person name="Minor W."/>
        </authorList>
    </citation>
    <scope>X-RAY CRYSTALLOGRAPHY (2.1 ANGSTROMS) OF MUTANT ALA-72 IN COMPLEX WITH COBALT ION AND SUBSTRATES</scope>
    <scope>FUNCTION</scope>
    <scope>CATALYTIC ACTIVITY</scope>
    <scope>COFACTOR</scope>
    <scope>BIOPHYSICOCHEMICAL PROPERTIES</scope>
    <scope>SUBUNIT</scope>
    <scope>MUTAGENESIS OF ARG-18; VAL-30; HIS-33; HIS-68; ASP-69; GLU-72; ASP-77; GLU-122 AND ASP-137</scope>
</reference>
<protein>
    <recommendedName>
        <fullName evidence="1">5'-deoxynucleotidase YfbR</fullName>
        <ecNumber evidence="1 3 5">3.1.3.89</ecNumber>
    </recommendedName>
    <alternativeName>
        <fullName evidence="1 6">5'-deoxyribonucleotidase</fullName>
    </alternativeName>
    <alternativeName>
        <fullName evidence="1">Nucleoside 5'-monophosphate phosphohydrolase</fullName>
    </alternativeName>
</protein>
<comment type="function">
    <text evidence="3 4 5">Essential component of the deoxycytidine triphosphate (dCTP) pathway for de novo synthesis of thymidylate. Catalyzes the strictly specific dephosphorylation of 2'-deoxyribonucleoside 5'-monophosphates (dAMP, dGMP, dTMP, dUMP, dIMP and dCMP) and does not dephosphorylate 5'-ribonucleotides or ribonucleoside 3'-monophosphates.</text>
</comment>
<comment type="catalytic activity">
    <reaction evidence="1 3 5">
        <text>a 2'-deoxyribonucleoside 5'-phosphate + H2O = a 2'-deoxyribonucleoside + phosphate</text>
        <dbReference type="Rhea" id="RHEA:36167"/>
        <dbReference type="ChEBI" id="CHEBI:15377"/>
        <dbReference type="ChEBI" id="CHEBI:18274"/>
        <dbReference type="ChEBI" id="CHEBI:43474"/>
        <dbReference type="ChEBI" id="CHEBI:65317"/>
        <dbReference type="EC" id="3.1.3.89"/>
    </reaction>
</comment>
<comment type="catalytic activity">
    <reaction evidence="3 5">
        <text>dAMP + H2O = 2'-deoxyadenosine + phosphate</text>
        <dbReference type="Rhea" id="RHEA:29371"/>
        <dbReference type="ChEBI" id="CHEBI:15377"/>
        <dbReference type="ChEBI" id="CHEBI:17256"/>
        <dbReference type="ChEBI" id="CHEBI:43474"/>
        <dbReference type="ChEBI" id="CHEBI:58245"/>
    </reaction>
</comment>
<comment type="catalytic activity">
    <reaction evidence="3 5">
        <text>dGMP + H2O = 2'-deoxyguanosine + phosphate</text>
        <dbReference type="Rhea" id="RHEA:29379"/>
        <dbReference type="ChEBI" id="CHEBI:15377"/>
        <dbReference type="ChEBI" id="CHEBI:17172"/>
        <dbReference type="ChEBI" id="CHEBI:43474"/>
        <dbReference type="ChEBI" id="CHEBI:57673"/>
    </reaction>
</comment>
<comment type="catalytic activity">
    <reaction evidence="3 5">
        <text>dTMP + H2O = thymidine + phosphate</text>
        <dbReference type="Rhea" id="RHEA:11080"/>
        <dbReference type="ChEBI" id="CHEBI:15377"/>
        <dbReference type="ChEBI" id="CHEBI:17748"/>
        <dbReference type="ChEBI" id="CHEBI:43474"/>
        <dbReference type="ChEBI" id="CHEBI:63528"/>
    </reaction>
</comment>
<comment type="catalytic activity">
    <reaction evidence="3 5">
        <text>dUMP + H2O = 2'-deoxyuridine + phosphate</text>
        <dbReference type="Rhea" id="RHEA:29355"/>
        <dbReference type="ChEBI" id="CHEBI:15377"/>
        <dbReference type="ChEBI" id="CHEBI:16450"/>
        <dbReference type="ChEBI" id="CHEBI:43474"/>
        <dbReference type="ChEBI" id="CHEBI:246422"/>
    </reaction>
</comment>
<comment type="catalytic activity">
    <reaction evidence="3 5">
        <text>dIMP + H2O = 2'-deoxyinosine + phosphate</text>
        <dbReference type="Rhea" id="RHEA:29383"/>
        <dbReference type="ChEBI" id="CHEBI:15377"/>
        <dbReference type="ChEBI" id="CHEBI:28997"/>
        <dbReference type="ChEBI" id="CHEBI:43474"/>
        <dbReference type="ChEBI" id="CHEBI:61194"/>
    </reaction>
</comment>
<comment type="catalytic activity">
    <reaction evidence="3 5">
        <text>dCMP + H2O = 2'-deoxycytidine + phosphate</text>
        <dbReference type="Rhea" id="RHEA:29363"/>
        <dbReference type="ChEBI" id="CHEBI:15377"/>
        <dbReference type="ChEBI" id="CHEBI:15698"/>
        <dbReference type="ChEBI" id="CHEBI:43474"/>
        <dbReference type="ChEBI" id="CHEBI:57566"/>
    </reaction>
</comment>
<comment type="cofactor">
    <cofactor evidence="3 5">
        <name>Co(2+)</name>
        <dbReference type="ChEBI" id="CHEBI:48828"/>
    </cofactor>
    <cofactor evidence="3">
        <name>Mn(2+)</name>
        <dbReference type="ChEBI" id="CHEBI:29035"/>
    </cofactor>
    <cofactor evidence="3">
        <name>Cu(2+)</name>
        <dbReference type="ChEBI" id="CHEBI:29036"/>
    </cofactor>
    <text evidence="3">A divalent metal cation. Highest activity with Co(2+), followed by Mn(2+) and Cu(2+).</text>
</comment>
<comment type="activity regulation">
    <text evidence="3">Inhibited by both ribo- and deoxyribonucleoside di- and triphosphates.</text>
</comment>
<comment type="biophysicochemical properties">
    <kinetics>
        <KM evidence="3">0.012 mM for 5'-dAMP</KM>
        <KM evidence="5">0.017 mM for 5'-dAMP</KM>
        <KM evidence="3">0.047 mM for 5'-dGMP</KM>
        <KM evidence="3">0.008 mM for 5'-dTMP</KM>
        <KM evidence="3">0.02 mM for 5'-dUMP</KM>
        <KM evidence="3">0.017 mM for 5'-dIMP</KM>
        <KM evidence="3">0.036 mM for 5'-dCMP</KM>
        <KM evidence="3">2.09 mM for pNPP</KM>
        <Vmax evidence="3">0.71 umol/min/mg enzyme with 5'-dAMP as substrate</Vmax>
        <Vmax evidence="5">0.36 umol/min/mg enzyme with 5'-dAMP as substrate</Vmax>
        <Vmax evidence="3">0.46 umol/min/mg enzyme with 5'-dGMP as substrate</Vmax>
        <Vmax evidence="3">0.37 umol/min/mg enzyme with 5'-dTMP as substrate</Vmax>
        <Vmax evidence="3">0.54 umol/min/mg enzyme with 5'-dUMP as substrate</Vmax>
        <Vmax evidence="3">0.56 umol/min/mg enzyme with 5'-dIMP as substrate</Vmax>
        <Vmax evidence="3">0.53 umol/min/mg enzyme with 5'-dCMP as substrate</Vmax>
        <Vmax evidence="3">1.32 umol/min/mg enzyme with pNPP as substrate</Vmax>
    </kinetics>
    <phDependence>
        <text evidence="3">Optimum pH is 8.0.</text>
    </phDependence>
</comment>
<comment type="subunit">
    <text evidence="1 3 5">Homodimer.</text>
</comment>
<comment type="subcellular location">
    <subcellularLocation>
        <location evidence="1 7">Cytoplasm</location>
    </subcellularLocation>
</comment>
<comment type="similarity">
    <text evidence="1 7">Belongs to the 5DNU family.</text>
</comment>
<keyword id="KW-0002">3D-structure</keyword>
<keyword id="KW-0170">Cobalt</keyword>
<keyword id="KW-0186">Copper</keyword>
<keyword id="KW-0963">Cytoplasm</keyword>
<keyword id="KW-0378">Hydrolase</keyword>
<keyword id="KW-0464">Manganese</keyword>
<keyword id="KW-0479">Metal-binding</keyword>
<keyword id="KW-0547">Nucleotide-binding</keyword>
<keyword id="KW-1185">Reference proteome</keyword>
<name>5DNU_ECOLI</name>
<organism>
    <name type="scientific">Escherichia coli (strain K12)</name>
    <dbReference type="NCBI Taxonomy" id="83333"/>
    <lineage>
        <taxon>Bacteria</taxon>
        <taxon>Pseudomonadati</taxon>
        <taxon>Pseudomonadota</taxon>
        <taxon>Gammaproteobacteria</taxon>
        <taxon>Enterobacterales</taxon>
        <taxon>Enterobacteriaceae</taxon>
        <taxon>Escherichia</taxon>
    </lineage>
</organism>
<sequence length="199" mass="22708">MKQSHFFAHLSRLKLINRWPLMRNVRTENVSEHSLQVAMVAHALAAIKNRKFGGNVNAERIALLAMYHDASEVLTGDLPTPVKYFNSQIAQEYKAIEKIAQQKLVDMVPEELRDIFAPLIDEHAYSDEEKSLVKQADALCAYLKCLEELAAGNNEFLLAKTRLEATLEARRSQEMDYFMEIFVPSFHLSLDEISQDSPL</sequence>
<proteinExistence type="evidence at protein level"/>
<gene>
    <name evidence="1" type="primary">yfbR</name>
    <name type="ordered locus">b2291</name>
    <name type="ordered locus">JW2288</name>
</gene>
<dbReference type="EC" id="3.1.3.89" evidence="1 3 5"/>
<dbReference type="EMBL" id="U00096">
    <property type="protein sequence ID" value="AAC75351.1"/>
    <property type="molecule type" value="Genomic_DNA"/>
</dbReference>
<dbReference type="EMBL" id="AP009048">
    <property type="protein sequence ID" value="BAE76684.1"/>
    <property type="molecule type" value="Genomic_DNA"/>
</dbReference>
<dbReference type="PIR" id="A65001">
    <property type="entry name" value="A65001"/>
</dbReference>
<dbReference type="RefSeq" id="NP_416794.1">
    <property type="nucleotide sequence ID" value="NC_000913.3"/>
</dbReference>
<dbReference type="RefSeq" id="WP_000813859.1">
    <property type="nucleotide sequence ID" value="NZ_LN832404.1"/>
</dbReference>
<dbReference type="PDB" id="2PAQ">
    <property type="method" value="X-ray"/>
    <property type="resolution" value="2.10 A"/>
    <property type="chains" value="A/B=1-199"/>
</dbReference>
<dbReference type="PDB" id="2PAR">
    <property type="method" value="X-ray"/>
    <property type="resolution" value="2.10 A"/>
    <property type="chains" value="A/B=1-199"/>
</dbReference>
<dbReference type="PDB" id="2PAU">
    <property type="method" value="X-ray"/>
    <property type="resolution" value="2.10 A"/>
    <property type="chains" value="A/B=1-199"/>
</dbReference>
<dbReference type="PDBsum" id="2PAQ"/>
<dbReference type="PDBsum" id="2PAR"/>
<dbReference type="PDBsum" id="2PAU"/>
<dbReference type="SMR" id="P76491"/>
<dbReference type="BioGRID" id="4262969">
    <property type="interactions" value="30"/>
</dbReference>
<dbReference type="DIP" id="DIP-28107N"/>
<dbReference type="FunCoup" id="P76491">
    <property type="interactions" value="233"/>
</dbReference>
<dbReference type="IntAct" id="P76491">
    <property type="interactions" value="2"/>
</dbReference>
<dbReference type="STRING" id="511145.b2291"/>
<dbReference type="jPOST" id="P76491"/>
<dbReference type="PaxDb" id="511145-b2291"/>
<dbReference type="EnsemblBacteria" id="AAC75351">
    <property type="protein sequence ID" value="AAC75351"/>
    <property type="gene ID" value="b2291"/>
</dbReference>
<dbReference type="GeneID" id="946771"/>
<dbReference type="KEGG" id="ecj:JW2288"/>
<dbReference type="KEGG" id="eco:b2291"/>
<dbReference type="KEGG" id="ecoc:C3026_12780"/>
<dbReference type="PATRIC" id="fig|1411691.4.peg.4444"/>
<dbReference type="EchoBASE" id="EB3855"/>
<dbReference type="eggNOG" id="COG1896">
    <property type="taxonomic scope" value="Bacteria"/>
</dbReference>
<dbReference type="HOGENOM" id="CLU_084784_0_0_6"/>
<dbReference type="InParanoid" id="P76491"/>
<dbReference type="OMA" id="NQSHFFA"/>
<dbReference type="OrthoDB" id="9812744at2"/>
<dbReference type="PhylomeDB" id="P76491"/>
<dbReference type="BioCyc" id="EcoCyc:G7185-MONOMER"/>
<dbReference type="BioCyc" id="MetaCyc:G7185-MONOMER"/>
<dbReference type="BRENDA" id="3.1.3.5">
    <property type="organism ID" value="2026"/>
</dbReference>
<dbReference type="BRENDA" id="3.1.3.89">
    <property type="organism ID" value="2026"/>
</dbReference>
<dbReference type="SABIO-RK" id="P76491"/>
<dbReference type="EvolutionaryTrace" id="P76491"/>
<dbReference type="PRO" id="PR:P76491"/>
<dbReference type="Proteomes" id="UP000000625">
    <property type="component" value="Chromosome"/>
</dbReference>
<dbReference type="GO" id="GO:0005737">
    <property type="term" value="C:cytoplasm"/>
    <property type="evidence" value="ECO:0007669"/>
    <property type="project" value="UniProtKB-SubCell"/>
</dbReference>
<dbReference type="GO" id="GO:0002953">
    <property type="term" value="F:5'-deoxynucleotidase activity"/>
    <property type="evidence" value="ECO:0000314"/>
    <property type="project" value="EcoCyc"/>
</dbReference>
<dbReference type="GO" id="GO:0050897">
    <property type="term" value="F:cobalt ion binding"/>
    <property type="evidence" value="ECO:0000314"/>
    <property type="project" value="EcoCyc"/>
</dbReference>
<dbReference type="GO" id="GO:0042802">
    <property type="term" value="F:identical protein binding"/>
    <property type="evidence" value="ECO:0000314"/>
    <property type="project" value="EcoCyc"/>
</dbReference>
<dbReference type="GO" id="GO:0000166">
    <property type="term" value="F:nucleotide binding"/>
    <property type="evidence" value="ECO:0007669"/>
    <property type="project" value="UniProtKB-KW"/>
</dbReference>
<dbReference type="GO" id="GO:0050340">
    <property type="term" value="F:thymidylate 5'-phosphatase activity"/>
    <property type="evidence" value="ECO:0007669"/>
    <property type="project" value="RHEA"/>
</dbReference>
<dbReference type="GO" id="GO:0006226">
    <property type="term" value="P:dUMP biosynthetic process"/>
    <property type="evidence" value="ECO:0000315"/>
    <property type="project" value="EcoCyc"/>
</dbReference>
<dbReference type="GO" id="GO:0010139">
    <property type="term" value="P:pyrimidine deoxyribonucleotide salvage"/>
    <property type="evidence" value="ECO:0000315"/>
    <property type="project" value="EcoCyc"/>
</dbReference>
<dbReference type="CDD" id="cd00077">
    <property type="entry name" value="HDc"/>
    <property type="match status" value="1"/>
</dbReference>
<dbReference type="FunFam" id="1.10.3210.10:FF:000002">
    <property type="entry name" value="Nucleotidase YfbR"/>
    <property type="match status" value="1"/>
</dbReference>
<dbReference type="Gene3D" id="1.10.3210.10">
    <property type="entry name" value="Hypothetical protein af1432"/>
    <property type="match status" value="1"/>
</dbReference>
<dbReference type="HAMAP" id="MF_01100">
    <property type="entry name" value="5DNU"/>
    <property type="match status" value="1"/>
</dbReference>
<dbReference type="InterPro" id="IPR003607">
    <property type="entry name" value="HD/PDEase_dom"/>
</dbReference>
<dbReference type="InterPro" id="IPR006674">
    <property type="entry name" value="HD_domain"/>
</dbReference>
<dbReference type="InterPro" id="IPR022971">
    <property type="entry name" value="YfbR"/>
</dbReference>
<dbReference type="InterPro" id="IPR039356">
    <property type="entry name" value="YfbR/HDDC2"/>
</dbReference>
<dbReference type="NCBIfam" id="NF003009">
    <property type="entry name" value="PRK03826.1"/>
    <property type="match status" value="1"/>
</dbReference>
<dbReference type="PANTHER" id="PTHR11845">
    <property type="entry name" value="5'-DEOXYNUCLEOTIDASE HDDC2"/>
    <property type="match status" value="1"/>
</dbReference>
<dbReference type="PANTHER" id="PTHR11845:SF13">
    <property type="entry name" value="5'-DEOXYNUCLEOTIDASE HDDC2"/>
    <property type="match status" value="1"/>
</dbReference>
<dbReference type="Pfam" id="PF12917">
    <property type="entry name" value="YfbR-like"/>
    <property type="match status" value="1"/>
</dbReference>
<dbReference type="SMART" id="SM00471">
    <property type="entry name" value="HDc"/>
    <property type="match status" value="1"/>
</dbReference>
<dbReference type="SUPFAM" id="SSF109604">
    <property type="entry name" value="HD-domain/PDEase-like"/>
    <property type="match status" value="1"/>
</dbReference>
<dbReference type="PROSITE" id="PS51831">
    <property type="entry name" value="HD"/>
    <property type="match status" value="1"/>
</dbReference>